<protein>
    <recommendedName>
        <fullName evidence="11">Carboxysome shell protein CsoS1B</fullName>
    </recommendedName>
</protein>
<dbReference type="EMBL" id="AF038430">
    <property type="protein sequence ID" value="AAC32557.1"/>
    <property type="molecule type" value="Genomic_DNA"/>
</dbReference>
<dbReference type="EMBL" id="CP001801">
    <property type="protein sequence ID" value="ACX95757.1"/>
    <property type="molecule type" value="Genomic_DNA"/>
</dbReference>
<dbReference type="PIR" id="S49416">
    <property type="entry name" value="S49416"/>
</dbReference>
<dbReference type="RefSeq" id="WP_012823793.1">
    <property type="nucleotide sequence ID" value="NC_013422.1"/>
</dbReference>
<dbReference type="SMR" id="P45690"/>
<dbReference type="STRING" id="555778.Hneap_0914"/>
<dbReference type="KEGG" id="hna:Hneap_0914"/>
<dbReference type="eggNOG" id="COG4577">
    <property type="taxonomic scope" value="Bacteria"/>
</dbReference>
<dbReference type="HOGENOM" id="CLU_064903_5_3_6"/>
<dbReference type="OrthoDB" id="9812608at2"/>
<dbReference type="Proteomes" id="UP000009102">
    <property type="component" value="Chromosome"/>
</dbReference>
<dbReference type="GO" id="GO:0031470">
    <property type="term" value="C:carboxysome"/>
    <property type="evidence" value="ECO:0007669"/>
    <property type="project" value="UniProtKB-SubCell"/>
</dbReference>
<dbReference type="GO" id="GO:0015977">
    <property type="term" value="P:carbon fixation"/>
    <property type="evidence" value="ECO:0007669"/>
    <property type="project" value="UniProtKB-KW"/>
</dbReference>
<dbReference type="CDD" id="cd07058">
    <property type="entry name" value="BMC_CsoS1"/>
    <property type="match status" value="1"/>
</dbReference>
<dbReference type="Gene3D" id="3.30.70.1710">
    <property type="match status" value="1"/>
</dbReference>
<dbReference type="InterPro" id="IPR020808">
    <property type="entry name" value="Bact_microcomp_CS"/>
</dbReference>
<dbReference type="InterPro" id="IPR000249">
    <property type="entry name" value="BMC_dom"/>
</dbReference>
<dbReference type="InterPro" id="IPR050575">
    <property type="entry name" value="BMC_shell"/>
</dbReference>
<dbReference type="InterPro" id="IPR037233">
    <property type="entry name" value="CcmK-like_sf"/>
</dbReference>
<dbReference type="InterPro" id="IPR044872">
    <property type="entry name" value="CcmK/CsoS1_BMC"/>
</dbReference>
<dbReference type="PANTHER" id="PTHR33941:SF11">
    <property type="entry name" value="BACTERIAL MICROCOMPARTMENT SHELL PROTEIN PDUJ"/>
    <property type="match status" value="1"/>
</dbReference>
<dbReference type="PANTHER" id="PTHR33941">
    <property type="entry name" value="PROPANEDIOL UTILIZATION PROTEIN PDUA"/>
    <property type="match status" value="1"/>
</dbReference>
<dbReference type="Pfam" id="PF00936">
    <property type="entry name" value="BMC"/>
    <property type="match status" value="1"/>
</dbReference>
<dbReference type="SMART" id="SM00877">
    <property type="entry name" value="BMC"/>
    <property type="match status" value="1"/>
</dbReference>
<dbReference type="SUPFAM" id="SSF143414">
    <property type="entry name" value="CcmK-like"/>
    <property type="match status" value="1"/>
</dbReference>
<dbReference type="PROSITE" id="PS01139">
    <property type="entry name" value="BMC_1"/>
    <property type="match status" value="1"/>
</dbReference>
<dbReference type="PROSITE" id="PS51930">
    <property type="entry name" value="BMC_2"/>
    <property type="match status" value="1"/>
</dbReference>
<evidence type="ECO:0000250" key="1">
    <source>
        <dbReference type="UniProtKB" id="P45689"/>
    </source>
</evidence>
<evidence type="ECO:0000255" key="2">
    <source>
        <dbReference type="PROSITE-ProRule" id="PRU01278"/>
    </source>
</evidence>
<evidence type="ECO:0000269" key="3">
    <source>
    </source>
</evidence>
<evidence type="ECO:0000269" key="4">
    <source>
    </source>
</evidence>
<evidence type="ECO:0000269" key="5">
    <source>
    </source>
</evidence>
<evidence type="ECO:0000269" key="6">
    <source>
    </source>
</evidence>
<evidence type="ECO:0000269" key="7">
    <source>
    </source>
</evidence>
<evidence type="ECO:0000269" key="8">
    <source ref="4"/>
</evidence>
<evidence type="ECO:0000303" key="9">
    <source>
    </source>
</evidence>
<evidence type="ECO:0000303" key="10">
    <source>
    </source>
</evidence>
<evidence type="ECO:0000305" key="11"/>
<evidence type="ECO:0000305" key="12">
    <source>
    </source>
</evidence>
<evidence type="ECO:0000305" key="13">
    <source>
    </source>
</evidence>
<keyword id="KW-1283">Bacterial microcompartment</keyword>
<keyword id="KW-0120">Carbon dioxide fixation</keyword>
<keyword id="KW-1282">Carboxysome</keyword>
<keyword id="KW-1185">Reference proteome</keyword>
<gene>
    <name evidence="10" type="primary">csoS1B</name>
    <name evidence="9" type="synonym">Orf3</name>
    <name type="ordered locus">Hneap_0914</name>
</gene>
<comment type="function">
    <text evidence="1 8 12">One of shell proteins of the carboxysome, a polyhedral inclusion where RuBisCO (ribulose bisphosphate carboxylase, ccbL-ccbS) is sequestered. Assembles into hexamers which make sheets that form the facets of the polyhedral carboxysome (By similarity). The shell probably limits the diffusion of CO(2) into and out of the carboxysome (Probable). There are estimated to be 540 CsoS1B proteins per carboxysome (Ref.4).</text>
</comment>
<comment type="function">
    <text evidence="7">Unlike beta-carboxysomes, alpha-carboxysomes (Cb) can form without cargo protein. CsoS2 is essential for Cb formation and is also capable of targeting foreign proteins to the Cb. The Cb shell assembles with the aid of CsoS2; CsoS1A, CsoS1B and CsoS1C form the majority of the shell while CsoS4A and CsoS4B form vertices. CsoS1D forms pseudohexamers that probably control metabolite flux into and out of the shell.</text>
</comment>
<comment type="subunit">
    <text evidence="1 5">Homohexamer with a small central pore (By similarity). Interacts with the N-terminus (residues 1-136) of RuBisCO (CbbL) (PubMed:30305640).</text>
</comment>
<comment type="subcellular location">
    <subcellularLocation>
        <location evidence="3 13">Carboxysome</location>
    </subcellularLocation>
    <text evidence="3 8 11">This bacterium makes alpha-type carboxysomes.</text>
</comment>
<comment type="domain">
    <text evidence="1">The tight homohexamer forms a small pore which is positively charged.</text>
</comment>
<comment type="disruption phenotype">
    <text evidence="6">Required for growth in ambient air.</text>
</comment>
<comment type="biotechnology">
    <text evidence="4 5 7">Expression of 10 genes for alpha-carboxysome (Cb) proteins (cbbL-cbbS-csoS2-csoS3-csoS4A-csoS4B-csoS1C-csoS1A-csoS1B-csoS1D) in E.coli generates compartments that resemble Cb, contain RuBisCO and have its catalytic activity, showing it is possible to make artificial, functional Cb using these 10 genes. Cargo proteins can be targeted to these organelles (PubMed:22184212, PubMed:30305640). Artificial Cb assembly in E.coli requires csoS2-csoS4A-csoS4B-csoS1C-csoS1A-csoS1B-csoS1D (but not the gene for carbonic anhydrase, csoS3). Targeting proteins to the organelle requires at least one of the CsoS2 C-repeats; 3 repeats gives the best localization. A nanoreactor of the Cb shell proteins has been engineered which generates H(2) using a ferredoxin-hydrogenase fusion (AC P07839-Q9FYU1) and a flavodoxin/ferredoxin--NADP reductase (AC A0A0K3QZA5) targeted separately to the Cb; the hydrogenase has first to be matured and activated by HydGXEF (AC Q8EAH9, Q8EAH8, Q8EAH7 and Q8EAH6 respectively). Encapsulation increases H(2) production about 20% during anaerobic growth, and over 4-fold more during aerobic growth (PubMed:33116131).</text>
</comment>
<comment type="similarity">
    <text evidence="11">Belongs to the bacterial microcompartments protein family. CsoS1 subfamily.</text>
</comment>
<organism>
    <name type="scientific">Halothiobacillus neapolitanus (strain ATCC 23641 / c2)</name>
    <name type="common">Thiobacillus neapolitanus</name>
    <dbReference type="NCBI Taxonomy" id="555778"/>
    <lineage>
        <taxon>Bacteria</taxon>
        <taxon>Pseudomonadati</taxon>
        <taxon>Pseudomonadota</taxon>
        <taxon>Gammaproteobacteria</taxon>
        <taxon>Chromatiales</taxon>
        <taxon>Halothiobacillaceae</taxon>
        <taxon>Halothiobacillus</taxon>
    </lineage>
</organism>
<accession>P45690</accession>
<accession>D0KZ84</accession>
<proteinExistence type="evidence at protein level"/>
<feature type="chain" id="PRO_0000201513" description="Carboxysome shell protein CsoS1B">
    <location>
        <begin position="1"/>
        <end position="110"/>
    </location>
</feature>
<feature type="domain" description="BMC" evidence="2">
    <location>
        <begin position="8"/>
        <end position="93"/>
    </location>
</feature>
<sequence length="110" mass="11301">MATTHGIALGMIETRGLVPAIEAADAMTKAAEVRLVGRSFVGGGYVTVMVRGETGAVNAAVRAGADACERVGDGLVAAHIIARVHSEVEIILPETPEDSDSAWCIANLNS</sequence>
<name>CSOSB_HALNC</name>
<reference key="1">
    <citation type="journal article" date="1994" name="Mol. Microbiol.">
        <title>Isolation and characterization of a carboxysome shell gene from Thiobacillus neapolitanus.</title>
        <authorList>
            <person name="English R.S."/>
            <person name="Lorbach S.C."/>
            <person name="Qin X."/>
            <person name="Shively J.M."/>
        </authorList>
    </citation>
    <scope>NUCLEOTIDE SEQUENCE [GENOMIC DNA]</scope>
    <source>
        <strain>ATCC 23641 / c2</strain>
    </source>
</reference>
<reference key="2">
    <citation type="journal article" date="1998" name="J. Bacteriol.">
        <title>Insertion mutation of the form I cbbL gene encoding ribulose bisphosphate carboxylase/oxygenase (RuBisCO) in Thiobacillus neapolitanus results in expression of form II RuBisCO, loss of carboxysomes, and an increased CO2 requirement for growth.</title>
        <authorList>
            <person name="Baker S.H."/>
            <person name="Jin S."/>
            <person name="Aldrich H.C."/>
            <person name="Howard G.T."/>
            <person name="Shively J.M."/>
        </authorList>
    </citation>
    <scope>SEQUENCE REVISION TO 2 AND 88-110</scope>
    <source>
        <strain>ATCC 23641 / c2</strain>
    </source>
</reference>
<reference key="3">
    <citation type="submission" date="2009-10" db="EMBL/GenBank/DDBJ databases">
        <title>Complete sequence of Halothiobacillus neapolitanus c2.</title>
        <authorList>
            <consortium name="US DOE Joint Genome Institute"/>
            <person name="Lucas S."/>
            <person name="Copeland A."/>
            <person name="Lapidus A."/>
            <person name="Glavina del Rio T."/>
            <person name="Tice H."/>
            <person name="Bruce D."/>
            <person name="Goodwin L."/>
            <person name="Pitluck S."/>
            <person name="Davenport K."/>
            <person name="Brettin T."/>
            <person name="Detter J.C."/>
            <person name="Han C."/>
            <person name="Tapia R."/>
            <person name="Larimer F."/>
            <person name="Land M."/>
            <person name="Hauser L."/>
            <person name="Kyrpides N."/>
            <person name="Mikhailova N."/>
            <person name="Kerfeld C."/>
            <person name="Cannon G."/>
            <person name="Heinhort S."/>
        </authorList>
    </citation>
    <scope>NUCLEOTIDE SEQUENCE [LARGE SCALE GENOMIC DNA]</scope>
    <source>
        <strain>ATCC 23641 / c2</strain>
    </source>
</reference>
<reference key="4">
    <citation type="book" date="2006" name="Microbiology Monographs">
        <title>Carboxysomes and Carboxysome-like Inclusions.</title>
        <editorList>
            <person name="Shively J.M."/>
        </editorList>
        <authorList>
            <person name="Heinhorst S."/>
            <person name="Cannon G.C."/>
            <person name="Shively J.M."/>
        </authorList>
    </citation>
    <scope>FUNCTION</scope>
    <scope>PROTEIN ABUNDANCE</scope>
    <scope>SUBCELLULAR LOCATION</scope>
</reference>
<reference key="5">
    <citation type="journal article" date="2008" name="J. Biol. Chem.">
        <title>CO2 fixation kinetics of Halothiobacillus neapolitanus mutant carboxysomes lacking carbonic anhydrase suggest the shell acts as a diffusional barrier for CO2.</title>
        <authorList>
            <person name="Dou Z."/>
            <person name="Heinhorst S."/>
            <person name="Williams E.B."/>
            <person name="Murin C.D."/>
            <person name="Shively J.M."/>
            <person name="Cannon G.C."/>
        </authorList>
    </citation>
    <scope>FUNCTION</scope>
    <scope>SUBCELLULAR LOCATION</scope>
    <source>
        <strain>ATCC 23641 / c2</strain>
    </source>
</reference>
<reference key="6">
    <citation type="journal article" date="2012" name="Proc. Natl. Acad. Sci. U.S.A.">
        <title>Modularity of a carbon-fixing protein organelle.</title>
        <authorList>
            <person name="Bonacci W."/>
            <person name="Teng P.K."/>
            <person name="Afonso B."/>
            <person name="Niederholtmeyer H."/>
            <person name="Grob P."/>
            <person name="Silver P.A."/>
            <person name="Savage D.F."/>
        </authorList>
    </citation>
    <scope>BIOTECHNOLOGY</scope>
    <source>
        <strain>ATCC 23641 / c2</strain>
    </source>
</reference>
<reference key="7">
    <citation type="journal article" date="2018" name="Sci. Rep.">
        <title>Deciphering molecular details in the assembly of alpha-type carboxysome.</title>
        <authorList>
            <person name="Liu Y."/>
            <person name="He X."/>
            <person name="Lim W."/>
            <person name="Mueller J."/>
            <person name="Lawrie J."/>
            <person name="Kramer L."/>
            <person name="Guo J."/>
            <person name="Niu W."/>
        </authorList>
    </citation>
    <scope>INTERACTION WITH CBBL</scope>
    <scope>BIOTECHNOLOGY</scope>
    <source>
        <strain>ATCC 23641 / c2</strain>
    </source>
</reference>
<reference key="8">
    <citation type="journal article" date="2019" name="Nat. Microbiol.">
        <title>DABs are inorganic carbon pumps found throughout prokaryotic phyla.</title>
        <authorList>
            <person name="Desmarais J.J."/>
            <person name="Flamholz A.I."/>
            <person name="Blikstad C."/>
            <person name="Dugan E.J."/>
            <person name="Laughlin T.G."/>
            <person name="Oltrogge L.M."/>
            <person name="Chen A.W."/>
            <person name="Wetmore K."/>
            <person name="Diamond S."/>
            <person name="Wang J.Y."/>
            <person name="Savage D.F."/>
        </authorList>
    </citation>
    <scope>DISRUPTION PHENOTYPE</scope>
    <source>
        <strain>ATCC 23641 / c2</strain>
    </source>
</reference>
<reference key="9">
    <citation type="journal article" date="2020" name="Nat. Commun.">
        <title>Reprogramming bacterial protein organelles as a nanoreactor for hydrogen production.</title>
        <authorList>
            <person name="Li T."/>
            <person name="Jiang Q."/>
            <person name="Huang J."/>
            <person name="Aitchison C.M."/>
            <person name="Huang F."/>
            <person name="Yang M."/>
            <person name="Dykes G.F."/>
            <person name="He H.L."/>
            <person name="Wang Q."/>
            <person name="Sprick R.S."/>
            <person name="Cooper A.I."/>
            <person name="Liu L.N."/>
        </authorList>
    </citation>
    <scope>CARBOXYSOME ASSEMBLY</scope>
    <scope>BIOTECHNOLOGY</scope>
</reference>